<proteinExistence type="inferred from homology"/>
<dbReference type="EMBL" id="CP000614">
    <property type="protein sequence ID" value="ABO53848.1"/>
    <property type="molecule type" value="Genomic_DNA"/>
</dbReference>
<dbReference type="SMR" id="A4JC45"/>
<dbReference type="KEGG" id="bvi:Bcep1808_0836"/>
<dbReference type="eggNOG" id="COG0829">
    <property type="taxonomic scope" value="Bacteria"/>
</dbReference>
<dbReference type="HOGENOM" id="CLU_056339_0_0_4"/>
<dbReference type="Proteomes" id="UP000002287">
    <property type="component" value="Chromosome 1"/>
</dbReference>
<dbReference type="GO" id="GO:0005737">
    <property type="term" value="C:cytoplasm"/>
    <property type="evidence" value="ECO:0007669"/>
    <property type="project" value="UniProtKB-SubCell"/>
</dbReference>
<dbReference type="GO" id="GO:0016151">
    <property type="term" value="F:nickel cation binding"/>
    <property type="evidence" value="ECO:0007669"/>
    <property type="project" value="UniProtKB-UniRule"/>
</dbReference>
<dbReference type="HAMAP" id="MF_01384">
    <property type="entry name" value="UreD"/>
    <property type="match status" value="1"/>
</dbReference>
<dbReference type="InterPro" id="IPR002669">
    <property type="entry name" value="UreD"/>
</dbReference>
<dbReference type="PANTHER" id="PTHR33643">
    <property type="entry name" value="UREASE ACCESSORY PROTEIN D"/>
    <property type="match status" value="1"/>
</dbReference>
<dbReference type="PANTHER" id="PTHR33643:SF1">
    <property type="entry name" value="UREASE ACCESSORY PROTEIN D"/>
    <property type="match status" value="1"/>
</dbReference>
<dbReference type="Pfam" id="PF01774">
    <property type="entry name" value="UreD"/>
    <property type="match status" value="1"/>
</dbReference>
<gene>
    <name evidence="1" type="primary">ureD</name>
    <name type="ordered locus">Bcep1808_0836</name>
</gene>
<protein>
    <recommendedName>
        <fullName evidence="1">Urease accessory protein UreD</fullName>
    </recommendedName>
</protein>
<organism>
    <name type="scientific">Burkholderia vietnamiensis (strain G4 / LMG 22486)</name>
    <name type="common">Burkholderia cepacia (strain R1808)</name>
    <dbReference type="NCBI Taxonomy" id="269482"/>
    <lineage>
        <taxon>Bacteria</taxon>
        <taxon>Pseudomonadati</taxon>
        <taxon>Pseudomonadota</taxon>
        <taxon>Betaproteobacteria</taxon>
        <taxon>Burkholderiales</taxon>
        <taxon>Burkholderiaceae</taxon>
        <taxon>Burkholderia</taxon>
        <taxon>Burkholderia cepacia complex</taxon>
    </lineage>
</organism>
<reference key="1">
    <citation type="submission" date="2007-03" db="EMBL/GenBank/DDBJ databases">
        <title>Complete sequence of chromosome 1 of Burkholderia vietnamiensis G4.</title>
        <authorList>
            <consortium name="US DOE Joint Genome Institute"/>
            <person name="Copeland A."/>
            <person name="Lucas S."/>
            <person name="Lapidus A."/>
            <person name="Barry K."/>
            <person name="Detter J.C."/>
            <person name="Glavina del Rio T."/>
            <person name="Hammon N."/>
            <person name="Israni S."/>
            <person name="Dalin E."/>
            <person name="Tice H."/>
            <person name="Pitluck S."/>
            <person name="Chain P."/>
            <person name="Malfatti S."/>
            <person name="Shin M."/>
            <person name="Vergez L."/>
            <person name="Schmutz J."/>
            <person name="Larimer F."/>
            <person name="Land M."/>
            <person name="Hauser L."/>
            <person name="Kyrpides N."/>
            <person name="Tiedje J."/>
            <person name="Richardson P."/>
        </authorList>
    </citation>
    <scope>NUCLEOTIDE SEQUENCE [LARGE SCALE GENOMIC DNA]</scope>
    <source>
        <strain>G4 / LMG 22486</strain>
    </source>
</reference>
<feature type="chain" id="PRO_0000340443" description="Urease accessory protein UreD">
    <location>
        <begin position="1"/>
        <end position="291"/>
    </location>
</feature>
<accession>A4JC45</accession>
<name>URED_BURVG</name>
<sequence length="291" mass="31164">MSAADSHACLSRPAAAKSWRGRLELGFERHGMRTTLVHRLHEGPLRVQRPLYPEGDGVCHAVIVHPPGGVAGGDRLDLDIALGDGTHAVLTTPGATKWYKSNGLDATQRIDIKVGAHAKLDWLPQNNLFFDAAHAALDFTLSLGAHASAIGWDATQLGRQAAGETWSAGRIASHATLVDADGRPLWTERALLDAHDPLRGALQGLAGFPVYGTLWAAGAACDAALAESLAARMPFDDTLRAGATCVTPGVVLVRTLATSMEALQRHFTDCWLALRPIVHRVDARPLRLWQT</sequence>
<keyword id="KW-0143">Chaperone</keyword>
<keyword id="KW-0963">Cytoplasm</keyword>
<keyword id="KW-0996">Nickel insertion</keyword>
<comment type="function">
    <text evidence="1">Required for maturation of urease via the functional incorporation of the urease nickel metallocenter.</text>
</comment>
<comment type="subunit">
    <text evidence="1">UreD, UreF and UreG form a complex that acts as a GTP-hydrolysis-dependent molecular chaperone, activating the urease apoprotein by helping to assemble the nickel containing metallocenter of UreC. The UreE protein probably delivers the nickel.</text>
</comment>
<comment type="subcellular location">
    <subcellularLocation>
        <location evidence="1">Cytoplasm</location>
    </subcellularLocation>
</comment>
<comment type="similarity">
    <text evidence="1">Belongs to the UreD family.</text>
</comment>
<evidence type="ECO:0000255" key="1">
    <source>
        <dbReference type="HAMAP-Rule" id="MF_01384"/>
    </source>
</evidence>